<keyword id="KW-0106">Calcium</keyword>
<keyword id="KW-0998">Cell outer membrane</keyword>
<keyword id="KW-0378">Hydrolase</keyword>
<keyword id="KW-0442">Lipid degradation</keyword>
<keyword id="KW-0443">Lipid metabolism</keyword>
<keyword id="KW-0472">Membrane</keyword>
<keyword id="KW-0479">Metal-binding</keyword>
<keyword id="KW-1185">Reference proteome</keyword>
<keyword id="KW-0732">Signal</keyword>
<keyword id="KW-0812">Transmembrane</keyword>
<keyword id="KW-1134">Transmembrane beta strand</keyword>
<accession>P0A922</accession>
<accession>P00631</accession>
<protein>
    <recommendedName>
        <fullName>Phospholipase A1</fullName>
        <ecNumber>3.1.1.32</ecNumber>
        <ecNumber>3.1.1.4</ecNumber>
    </recommendedName>
    <alternativeName>
        <fullName>Detergent-resistant phospholipase A</fullName>
        <shortName>DR-phospholipase A</shortName>
    </alternativeName>
    <alternativeName>
        <fullName>Outer membrane phospholipase A</fullName>
        <shortName>OM PLA</shortName>
        <shortName>OMPLA</shortName>
    </alternativeName>
    <alternativeName>
        <fullName>Phosphatidylcholine 1-acylhydrolase</fullName>
    </alternativeName>
</protein>
<reference key="1">
    <citation type="journal article" date="2001" name="Nature">
        <title>Genome sequence of enterohaemorrhagic Escherichia coli O157:H7.</title>
        <authorList>
            <person name="Perna N.T."/>
            <person name="Plunkett G. III"/>
            <person name="Burland V."/>
            <person name="Mau B."/>
            <person name="Glasner J.D."/>
            <person name="Rose D.J."/>
            <person name="Mayhew G.F."/>
            <person name="Evans P.S."/>
            <person name="Gregor J."/>
            <person name="Kirkpatrick H.A."/>
            <person name="Posfai G."/>
            <person name="Hackett J."/>
            <person name="Klink S."/>
            <person name="Boutin A."/>
            <person name="Shao Y."/>
            <person name="Miller L."/>
            <person name="Grotbeck E.J."/>
            <person name="Davis N.W."/>
            <person name="Lim A."/>
            <person name="Dimalanta E.T."/>
            <person name="Potamousis K."/>
            <person name="Apodaca J."/>
            <person name="Anantharaman T.S."/>
            <person name="Lin J."/>
            <person name="Yen G."/>
            <person name="Schwartz D.C."/>
            <person name="Welch R.A."/>
            <person name="Blattner F.R."/>
        </authorList>
    </citation>
    <scope>NUCLEOTIDE SEQUENCE [LARGE SCALE GENOMIC DNA]</scope>
    <source>
        <strain>O157:H7 / EDL933 / ATCC 700927 / EHEC</strain>
    </source>
</reference>
<reference key="2">
    <citation type="journal article" date="2001" name="DNA Res.">
        <title>Complete genome sequence of enterohemorrhagic Escherichia coli O157:H7 and genomic comparison with a laboratory strain K-12.</title>
        <authorList>
            <person name="Hayashi T."/>
            <person name="Makino K."/>
            <person name="Ohnishi M."/>
            <person name="Kurokawa K."/>
            <person name="Ishii K."/>
            <person name="Yokoyama K."/>
            <person name="Han C.-G."/>
            <person name="Ohtsubo E."/>
            <person name="Nakayama K."/>
            <person name="Murata T."/>
            <person name="Tanaka M."/>
            <person name="Tobe T."/>
            <person name="Iida T."/>
            <person name="Takami H."/>
            <person name="Honda T."/>
            <person name="Sasakawa C."/>
            <person name="Ogasawara N."/>
            <person name="Yasunaga T."/>
            <person name="Kuhara S."/>
            <person name="Shiba T."/>
            <person name="Hattori M."/>
            <person name="Shinagawa H."/>
        </authorList>
    </citation>
    <scope>NUCLEOTIDE SEQUENCE [LARGE SCALE GENOMIC DNA]</scope>
    <source>
        <strain>O157:H7 / Sakai / RIMD 0509952 / EHEC</strain>
    </source>
</reference>
<name>PA1_ECO57</name>
<proteinExistence type="inferred from homology"/>
<comment type="function">
    <text evidence="1">Hydrolysis of phosphatidylcholine with phospholipase A2 (EC 3.1.1.4) and phospholipase A1 (EC 3.1.1.32) activities.</text>
</comment>
<comment type="catalytic activity">
    <reaction>
        <text>a 1,2-diacyl-sn-glycero-3-phosphocholine + H2O = a 2-acyl-sn-glycero-3-phosphocholine + a fatty acid + H(+)</text>
        <dbReference type="Rhea" id="RHEA:18689"/>
        <dbReference type="ChEBI" id="CHEBI:15377"/>
        <dbReference type="ChEBI" id="CHEBI:15378"/>
        <dbReference type="ChEBI" id="CHEBI:28868"/>
        <dbReference type="ChEBI" id="CHEBI:57643"/>
        <dbReference type="ChEBI" id="CHEBI:57875"/>
        <dbReference type="EC" id="3.1.1.32"/>
    </reaction>
</comment>
<comment type="catalytic activity">
    <reaction>
        <text>a 1,2-diacyl-sn-glycero-3-phosphocholine + H2O = a 1-acyl-sn-glycero-3-phosphocholine + a fatty acid + H(+)</text>
        <dbReference type="Rhea" id="RHEA:15801"/>
        <dbReference type="ChEBI" id="CHEBI:15377"/>
        <dbReference type="ChEBI" id="CHEBI:15378"/>
        <dbReference type="ChEBI" id="CHEBI:28868"/>
        <dbReference type="ChEBI" id="CHEBI:57643"/>
        <dbReference type="ChEBI" id="CHEBI:58168"/>
        <dbReference type="EC" id="3.1.1.4"/>
    </reaction>
</comment>
<comment type="cofactor">
    <cofactor evidence="1">
        <name>Ca(2+)</name>
        <dbReference type="ChEBI" id="CHEBI:29108"/>
    </cofactor>
    <text evidence="1">Binds 1 Ca(2+) ion per monomer. In the dimeric form the Ca(2+) is bound by different amino acids with binding of each Ca(2+) shared with ligands coming from each monomer. The Ca(2+) ion may have a role in catalysis.</text>
</comment>
<comment type="subunit">
    <text evidence="1">Homodimer; dimerization is reversible, and the dimeric form is the active one.</text>
</comment>
<comment type="subcellular location">
    <subcellularLocation>
        <location evidence="1">Cell outer membrane</location>
        <topology evidence="1">Multi-pass membrane protein</topology>
    </subcellularLocation>
    <text evidence="1">One of the very few enzymes located there.</text>
</comment>
<comment type="similarity">
    <text evidence="2">Belongs to the phospholipase A1 family.</text>
</comment>
<sequence>MRTLQGWLLPVFMLPMAVYAQEATVKEVHDAPAVRGSIIANMLQEHDNPFTLYPYDTNYLIYTQTSDLNKEAIASYDWAENARKDEVKFQLSLAFPLWRGILGPNSVLGASYTQKSWWQLSNSEESSPFRETNYEPQLFLGFATDYRFAGWTLRDVEMGYNHDSNGRSDPTSRSWNRLYTRLMAENGNWLVEVKPWYVVGNTDDNPDITKYMGYYQLKIGYHLGDAVLSAKGQYNWNTGYGGAELGLSYPITKHVRLYTQVYSGYGESLIDYNFNQTRVGVGVMLNDLF</sequence>
<dbReference type="EC" id="3.1.1.32"/>
<dbReference type="EC" id="3.1.1.4"/>
<dbReference type="EMBL" id="AE005174">
    <property type="protein sequence ID" value="AAG59017.1"/>
    <property type="molecule type" value="Genomic_DNA"/>
</dbReference>
<dbReference type="EMBL" id="BA000007">
    <property type="protein sequence ID" value="BAB38174.1"/>
    <property type="molecule type" value="Genomic_DNA"/>
</dbReference>
<dbReference type="PIR" id="E86069">
    <property type="entry name" value="E86069"/>
</dbReference>
<dbReference type="PIR" id="G91222">
    <property type="entry name" value="G91222"/>
</dbReference>
<dbReference type="RefSeq" id="NP_312778.1">
    <property type="nucleotide sequence ID" value="NC_002695.1"/>
</dbReference>
<dbReference type="RefSeq" id="WP_001259700.1">
    <property type="nucleotide sequence ID" value="NZ_VOAI01000017.1"/>
</dbReference>
<dbReference type="SMR" id="P0A922"/>
<dbReference type="STRING" id="155864.Z5342"/>
<dbReference type="GeneID" id="75204815"/>
<dbReference type="GeneID" id="915153"/>
<dbReference type="KEGG" id="ece:Z5342"/>
<dbReference type="KEGG" id="ecs:ECs_4751"/>
<dbReference type="PATRIC" id="fig|386585.9.peg.4960"/>
<dbReference type="eggNOG" id="COG2829">
    <property type="taxonomic scope" value="Bacteria"/>
</dbReference>
<dbReference type="HOGENOM" id="CLU_045813_1_0_6"/>
<dbReference type="OMA" id="DVRWGGC"/>
<dbReference type="Proteomes" id="UP000000558">
    <property type="component" value="Chromosome"/>
</dbReference>
<dbReference type="Proteomes" id="UP000002519">
    <property type="component" value="Chromosome"/>
</dbReference>
<dbReference type="GO" id="GO:0009279">
    <property type="term" value="C:cell outer membrane"/>
    <property type="evidence" value="ECO:0007669"/>
    <property type="project" value="UniProtKB-SubCell"/>
</dbReference>
<dbReference type="GO" id="GO:0005509">
    <property type="term" value="F:calcium ion binding"/>
    <property type="evidence" value="ECO:0007669"/>
    <property type="project" value="TreeGrafter"/>
</dbReference>
<dbReference type="GO" id="GO:0008970">
    <property type="term" value="F:phospholipase A1 activity"/>
    <property type="evidence" value="ECO:0007669"/>
    <property type="project" value="UniProtKB-EC"/>
</dbReference>
<dbReference type="GO" id="GO:0004623">
    <property type="term" value="F:phospholipase A2 activity"/>
    <property type="evidence" value="ECO:0007669"/>
    <property type="project" value="UniProtKB-EC"/>
</dbReference>
<dbReference type="GO" id="GO:0016042">
    <property type="term" value="P:lipid catabolic process"/>
    <property type="evidence" value="ECO:0007669"/>
    <property type="project" value="UniProtKB-KW"/>
</dbReference>
<dbReference type="CDD" id="cd00541">
    <property type="entry name" value="OMPLA"/>
    <property type="match status" value="1"/>
</dbReference>
<dbReference type="FunFam" id="2.40.230.10:FF:000001">
    <property type="entry name" value="Phospholipase A(1)"/>
    <property type="match status" value="1"/>
</dbReference>
<dbReference type="Gene3D" id="2.40.230.10">
    <property type="entry name" value="Phospholipase A1"/>
    <property type="match status" value="1"/>
</dbReference>
<dbReference type="InterPro" id="IPR003187">
    <property type="entry name" value="PLipase_A1"/>
</dbReference>
<dbReference type="InterPro" id="IPR036541">
    <property type="entry name" value="PLipase_A1_sf"/>
</dbReference>
<dbReference type="NCBIfam" id="NF008031">
    <property type="entry name" value="PRK10763.1"/>
    <property type="match status" value="1"/>
</dbReference>
<dbReference type="PANTHER" id="PTHR40457">
    <property type="entry name" value="PHOSPHOLIPASE A1"/>
    <property type="match status" value="1"/>
</dbReference>
<dbReference type="PANTHER" id="PTHR40457:SF1">
    <property type="entry name" value="PHOSPHOLIPASE A1"/>
    <property type="match status" value="1"/>
</dbReference>
<dbReference type="Pfam" id="PF02253">
    <property type="entry name" value="PLA1"/>
    <property type="match status" value="1"/>
</dbReference>
<dbReference type="PRINTS" id="PR01486">
    <property type="entry name" value="PHPHLIPASEA1"/>
</dbReference>
<dbReference type="SUPFAM" id="SSF56931">
    <property type="entry name" value="Outer membrane phospholipase A (OMPLA)"/>
    <property type="match status" value="1"/>
</dbReference>
<evidence type="ECO:0000250" key="1"/>
<evidence type="ECO:0000305" key="2"/>
<feature type="signal peptide" evidence="1">
    <location>
        <begin position="1"/>
        <end position="20"/>
    </location>
</feature>
<feature type="chain" id="PRO_0000021984" description="Phospholipase A1">
    <location>
        <begin position="21"/>
        <end position="289"/>
    </location>
</feature>
<feature type="topological domain" description="Periplasmic" evidence="1">
    <location>
        <begin position="21"/>
        <end position="52"/>
    </location>
</feature>
<feature type="transmembrane region" description="Beta stranded" evidence="1">
    <location>
        <begin position="53"/>
        <end position="65"/>
    </location>
</feature>
<feature type="topological domain" description="Extracellular" evidence="1">
    <location>
        <begin position="66"/>
        <end position="84"/>
    </location>
</feature>
<feature type="transmembrane region" description="Beta stranded" evidence="1">
    <location>
        <begin position="85"/>
        <end position="99"/>
    </location>
</feature>
<feature type="topological domain" description="Periplasmic" evidence="1">
    <location>
        <begin position="100"/>
        <end position="105"/>
    </location>
</feature>
<feature type="transmembrane region" description="Beta stranded" evidence="1">
    <location>
        <begin position="106"/>
        <end position="118"/>
    </location>
</feature>
<feature type="topological domain" description="Extracellular" evidence="1">
    <location>
        <begin position="119"/>
        <end position="128"/>
    </location>
</feature>
<feature type="transmembrane region" description="Beta stranded" evidence="1">
    <location>
        <begin position="129"/>
        <end position="148"/>
    </location>
</feature>
<feature type="topological domain" description="Periplasmic" evidence="1">
    <location>
        <begin position="149"/>
        <end position="150"/>
    </location>
</feature>
<feature type="transmembrane region" description="Beta stranded" evidence="1">
    <location>
        <begin position="151"/>
        <end position="164"/>
    </location>
</feature>
<feature type="topological domain" description="Extracellular" evidence="1">
    <location>
        <begin position="165"/>
        <end position="173"/>
    </location>
</feature>
<feature type="transmembrane region" description="Beta stranded" evidence="1">
    <location>
        <begin position="174"/>
        <end position="186"/>
    </location>
</feature>
<feature type="topological domain" description="Periplasmic" evidence="1">
    <location>
        <begin position="187"/>
        <end position="188"/>
    </location>
</feature>
<feature type="transmembrane region" description="Beta stranded" evidence="1">
    <location>
        <begin position="189"/>
        <end position="198"/>
    </location>
</feature>
<feature type="topological domain" description="Extracellular" evidence="1">
    <location>
        <begin position="199"/>
        <end position="216"/>
    </location>
</feature>
<feature type="transmembrane region" description="Beta stranded" evidence="1">
    <location>
        <begin position="217"/>
        <end position="223"/>
    </location>
</feature>
<feature type="topological domain" description="Periplasmic" evidence="1">
    <location>
        <begin position="224"/>
        <end position="225"/>
    </location>
</feature>
<feature type="transmembrane region" description="Beta stranded" evidence="1">
    <location>
        <begin position="226"/>
        <end position="234"/>
    </location>
</feature>
<feature type="topological domain" description="Extracellular" evidence="1">
    <location>
        <begin position="235"/>
        <end position="241"/>
    </location>
</feature>
<feature type="transmembrane region" description="Beta stranded" evidence="1">
    <location>
        <begin position="242"/>
        <end position="250"/>
    </location>
</feature>
<feature type="topological domain" description="Periplasmic" evidence="1">
    <location>
        <begin position="251"/>
        <end position="255"/>
    </location>
</feature>
<feature type="transmembrane region" description="Beta stranded" evidence="1">
    <location>
        <begin position="256"/>
        <end position="265"/>
    </location>
</feature>
<feature type="topological domain" description="Extracellular" evidence="1">
    <location>
        <begin position="266"/>
        <end position="274"/>
    </location>
</feature>
<feature type="transmembrane region" description="Beta stranded" evidence="1">
    <location>
        <begin position="275"/>
        <end position="286"/>
    </location>
</feature>
<feature type="topological domain" description="Periplasmic" evidence="1">
    <location>
        <begin position="287"/>
        <end position="289"/>
    </location>
</feature>
<feature type="active site" description="Proton acceptor" evidence="1">
    <location>
        <position position="162"/>
    </location>
</feature>
<feature type="active site" description="Nucleophile" evidence="1">
    <location>
        <position position="164"/>
    </location>
</feature>
<feature type="binding site" description="in dimeric form" evidence="1">
    <location>
        <position position="126"/>
    </location>
    <ligand>
        <name>Ca(2+)</name>
        <dbReference type="ChEBI" id="CHEBI:29108"/>
        <label>1</label>
    </ligand>
</feature>
<feature type="binding site" description="in dimeric form" evidence="1">
    <location>
        <position position="167"/>
    </location>
    <ligand>
        <name>Ca(2+)</name>
        <dbReference type="ChEBI" id="CHEBI:29108"/>
        <label>2</label>
    </ligand>
</feature>
<feature type="binding site" description="in dimeric form" evidence="1">
    <location>
        <position position="172"/>
    </location>
    <ligand>
        <name>Ca(2+)</name>
        <dbReference type="ChEBI" id="CHEBI:29108"/>
        <label>2</label>
    </ligand>
</feature>
<feature type="binding site" description="in monomeric form" evidence="1">
    <location>
        <position position="204"/>
    </location>
    <ligand>
        <name>Ca(2+)</name>
        <dbReference type="ChEBI" id="CHEBI:29108"/>
        <label>3</label>
    </ligand>
</feature>
<gene>
    <name type="primary">pldA</name>
    <name type="ordered locus">Z5342</name>
    <name type="ordered locus">ECs4751</name>
</gene>
<organism>
    <name type="scientific">Escherichia coli O157:H7</name>
    <dbReference type="NCBI Taxonomy" id="83334"/>
    <lineage>
        <taxon>Bacteria</taxon>
        <taxon>Pseudomonadati</taxon>
        <taxon>Pseudomonadota</taxon>
        <taxon>Gammaproteobacteria</taxon>
        <taxon>Enterobacterales</taxon>
        <taxon>Enterobacteriaceae</taxon>
        <taxon>Escherichia</taxon>
    </lineage>
</organism>